<proteinExistence type="inferred from homology"/>
<reference key="1">
    <citation type="journal article" date="2007" name="Proc. Natl. Acad. Sci. U.S.A.">
        <title>The Orientia tsutsugamushi genome reveals massive proliferation of conjugative type IV secretion system and host-cell interaction genes.</title>
        <authorList>
            <person name="Cho N.-H."/>
            <person name="Kim H.-R."/>
            <person name="Lee J.-H."/>
            <person name="Kim S.-Y."/>
            <person name="Kim J."/>
            <person name="Cha S."/>
            <person name="Kim S.-Y."/>
            <person name="Darby A.C."/>
            <person name="Fuxelius H.-H."/>
            <person name="Yin J."/>
            <person name="Kim J.H."/>
            <person name="Kim J."/>
            <person name="Lee S.J."/>
            <person name="Koh Y.-S."/>
            <person name="Jang W.-J."/>
            <person name="Park K.-H."/>
            <person name="Andersson S.G.E."/>
            <person name="Choi M.-S."/>
            <person name="Kim I.-S."/>
        </authorList>
    </citation>
    <scope>NUCLEOTIDE SEQUENCE [LARGE SCALE GENOMIC DNA]</scope>
    <source>
        <strain>Boryong</strain>
    </source>
</reference>
<organism>
    <name type="scientific">Orientia tsutsugamushi (strain Boryong)</name>
    <name type="common">Rickettsia tsutsugamushi</name>
    <dbReference type="NCBI Taxonomy" id="357244"/>
    <lineage>
        <taxon>Bacteria</taxon>
        <taxon>Pseudomonadati</taxon>
        <taxon>Pseudomonadota</taxon>
        <taxon>Alphaproteobacteria</taxon>
        <taxon>Rickettsiales</taxon>
        <taxon>Rickettsiaceae</taxon>
        <taxon>Rickettsieae</taxon>
        <taxon>Orientia</taxon>
    </lineage>
</organism>
<accession>A5CF23</accession>
<keyword id="KW-0963">Cytoplasm</keyword>
<keyword id="KW-0251">Elongation factor</keyword>
<keyword id="KW-0342">GTP-binding</keyword>
<keyword id="KW-0547">Nucleotide-binding</keyword>
<keyword id="KW-0648">Protein biosynthesis</keyword>
<keyword id="KW-1185">Reference proteome</keyword>
<dbReference type="EMBL" id="AM494475">
    <property type="protein sequence ID" value="CAM80879.1"/>
    <property type="molecule type" value="Genomic_DNA"/>
</dbReference>
<dbReference type="RefSeq" id="WP_011945045.1">
    <property type="nucleotide sequence ID" value="NC_009488.1"/>
</dbReference>
<dbReference type="SMR" id="A5CF23"/>
<dbReference type="KEGG" id="ots:OTBS_1784"/>
<dbReference type="eggNOG" id="COG0480">
    <property type="taxonomic scope" value="Bacteria"/>
</dbReference>
<dbReference type="HOGENOM" id="CLU_002794_4_1_5"/>
<dbReference type="Proteomes" id="UP000001565">
    <property type="component" value="Chromosome"/>
</dbReference>
<dbReference type="GO" id="GO:0005737">
    <property type="term" value="C:cytoplasm"/>
    <property type="evidence" value="ECO:0007669"/>
    <property type="project" value="UniProtKB-SubCell"/>
</dbReference>
<dbReference type="GO" id="GO:0005525">
    <property type="term" value="F:GTP binding"/>
    <property type="evidence" value="ECO:0007669"/>
    <property type="project" value="UniProtKB-UniRule"/>
</dbReference>
<dbReference type="GO" id="GO:0003924">
    <property type="term" value="F:GTPase activity"/>
    <property type="evidence" value="ECO:0007669"/>
    <property type="project" value="InterPro"/>
</dbReference>
<dbReference type="GO" id="GO:0003746">
    <property type="term" value="F:translation elongation factor activity"/>
    <property type="evidence" value="ECO:0007669"/>
    <property type="project" value="UniProtKB-UniRule"/>
</dbReference>
<dbReference type="GO" id="GO:0032790">
    <property type="term" value="P:ribosome disassembly"/>
    <property type="evidence" value="ECO:0007669"/>
    <property type="project" value="TreeGrafter"/>
</dbReference>
<dbReference type="CDD" id="cd01886">
    <property type="entry name" value="EF-G"/>
    <property type="match status" value="1"/>
</dbReference>
<dbReference type="CDD" id="cd16262">
    <property type="entry name" value="EFG_III"/>
    <property type="match status" value="1"/>
</dbReference>
<dbReference type="CDD" id="cd01434">
    <property type="entry name" value="EFG_mtEFG1_IV"/>
    <property type="match status" value="1"/>
</dbReference>
<dbReference type="CDD" id="cd03713">
    <property type="entry name" value="EFG_mtEFG_C"/>
    <property type="match status" value="1"/>
</dbReference>
<dbReference type="CDD" id="cd04088">
    <property type="entry name" value="EFG_mtEFG_II"/>
    <property type="match status" value="1"/>
</dbReference>
<dbReference type="FunFam" id="2.40.30.10:FF:000006">
    <property type="entry name" value="Elongation factor G"/>
    <property type="match status" value="1"/>
</dbReference>
<dbReference type="FunFam" id="3.30.230.10:FF:000003">
    <property type="entry name" value="Elongation factor G"/>
    <property type="match status" value="1"/>
</dbReference>
<dbReference type="FunFam" id="3.30.70.240:FF:000001">
    <property type="entry name" value="Elongation factor G"/>
    <property type="match status" value="1"/>
</dbReference>
<dbReference type="FunFam" id="3.30.70.870:FF:000001">
    <property type="entry name" value="Elongation factor G"/>
    <property type="match status" value="1"/>
</dbReference>
<dbReference type="FunFam" id="3.40.50.300:FF:000029">
    <property type="entry name" value="Elongation factor G"/>
    <property type="match status" value="1"/>
</dbReference>
<dbReference type="Gene3D" id="3.30.230.10">
    <property type="match status" value="1"/>
</dbReference>
<dbReference type="Gene3D" id="3.30.70.240">
    <property type="match status" value="1"/>
</dbReference>
<dbReference type="Gene3D" id="3.30.70.870">
    <property type="entry name" value="Elongation Factor G (Translational Gtpase), domain 3"/>
    <property type="match status" value="1"/>
</dbReference>
<dbReference type="Gene3D" id="3.40.50.300">
    <property type="entry name" value="P-loop containing nucleotide triphosphate hydrolases"/>
    <property type="match status" value="1"/>
</dbReference>
<dbReference type="Gene3D" id="2.40.30.10">
    <property type="entry name" value="Translation factors"/>
    <property type="match status" value="1"/>
</dbReference>
<dbReference type="HAMAP" id="MF_00054_B">
    <property type="entry name" value="EF_G_EF_2_B"/>
    <property type="match status" value="1"/>
</dbReference>
<dbReference type="InterPro" id="IPR053905">
    <property type="entry name" value="EF-G-like_DII"/>
</dbReference>
<dbReference type="InterPro" id="IPR041095">
    <property type="entry name" value="EFG_II"/>
</dbReference>
<dbReference type="InterPro" id="IPR009022">
    <property type="entry name" value="EFG_III"/>
</dbReference>
<dbReference type="InterPro" id="IPR035647">
    <property type="entry name" value="EFG_III/V"/>
</dbReference>
<dbReference type="InterPro" id="IPR047872">
    <property type="entry name" value="EFG_IV"/>
</dbReference>
<dbReference type="InterPro" id="IPR035649">
    <property type="entry name" value="EFG_V"/>
</dbReference>
<dbReference type="InterPro" id="IPR000640">
    <property type="entry name" value="EFG_V-like"/>
</dbReference>
<dbReference type="InterPro" id="IPR031157">
    <property type="entry name" value="G_TR_CS"/>
</dbReference>
<dbReference type="InterPro" id="IPR027417">
    <property type="entry name" value="P-loop_NTPase"/>
</dbReference>
<dbReference type="InterPro" id="IPR020568">
    <property type="entry name" value="Ribosomal_Su5_D2-typ_SF"/>
</dbReference>
<dbReference type="InterPro" id="IPR014721">
    <property type="entry name" value="Ribsml_uS5_D2-typ_fold_subgr"/>
</dbReference>
<dbReference type="InterPro" id="IPR005225">
    <property type="entry name" value="Small_GTP-bd"/>
</dbReference>
<dbReference type="InterPro" id="IPR000795">
    <property type="entry name" value="T_Tr_GTP-bd_dom"/>
</dbReference>
<dbReference type="InterPro" id="IPR009000">
    <property type="entry name" value="Transl_B-barrel_sf"/>
</dbReference>
<dbReference type="InterPro" id="IPR004540">
    <property type="entry name" value="Transl_elong_EFG/EF2"/>
</dbReference>
<dbReference type="InterPro" id="IPR005517">
    <property type="entry name" value="Transl_elong_EFG/EF2_IV"/>
</dbReference>
<dbReference type="NCBIfam" id="TIGR00484">
    <property type="entry name" value="EF-G"/>
    <property type="match status" value="1"/>
</dbReference>
<dbReference type="NCBIfam" id="NF009381">
    <property type="entry name" value="PRK12740.1-5"/>
    <property type="match status" value="1"/>
</dbReference>
<dbReference type="NCBIfam" id="TIGR00231">
    <property type="entry name" value="small_GTP"/>
    <property type="match status" value="1"/>
</dbReference>
<dbReference type="PANTHER" id="PTHR43261:SF1">
    <property type="entry name" value="RIBOSOME-RELEASING FACTOR 2, MITOCHONDRIAL"/>
    <property type="match status" value="1"/>
</dbReference>
<dbReference type="PANTHER" id="PTHR43261">
    <property type="entry name" value="TRANSLATION ELONGATION FACTOR G-RELATED"/>
    <property type="match status" value="1"/>
</dbReference>
<dbReference type="Pfam" id="PF22042">
    <property type="entry name" value="EF-G_D2"/>
    <property type="match status" value="1"/>
</dbReference>
<dbReference type="Pfam" id="PF00679">
    <property type="entry name" value="EFG_C"/>
    <property type="match status" value="1"/>
</dbReference>
<dbReference type="Pfam" id="PF14492">
    <property type="entry name" value="EFG_III"/>
    <property type="match status" value="1"/>
</dbReference>
<dbReference type="Pfam" id="PF03764">
    <property type="entry name" value="EFG_IV"/>
    <property type="match status" value="1"/>
</dbReference>
<dbReference type="Pfam" id="PF00009">
    <property type="entry name" value="GTP_EFTU"/>
    <property type="match status" value="1"/>
</dbReference>
<dbReference type="PRINTS" id="PR00315">
    <property type="entry name" value="ELONGATNFCT"/>
</dbReference>
<dbReference type="SMART" id="SM00838">
    <property type="entry name" value="EFG_C"/>
    <property type="match status" value="1"/>
</dbReference>
<dbReference type="SMART" id="SM00889">
    <property type="entry name" value="EFG_IV"/>
    <property type="match status" value="1"/>
</dbReference>
<dbReference type="SUPFAM" id="SSF54980">
    <property type="entry name" value="EF-G C-terminal domain-like"/>
    <property type="match status" value="2"/>
</dbReference>
<dbReference type="SUPFAM" id="SSF52540">
    <property type="entry name" value="P-loop containing nucleoside triphosphate hydrolases"/>
    <property type="match status" value="1"/>
</dbReference>
<dbReference type="SUPFAM" id="SSF54211">
    <property type="entry name" value="Ribosomal protein S5 domain 2-like"/>
    <property type="match status" value="1"/>
</dbReference>
<dbReference type="SUPFAM" id="SSF50447">
    <property type="entry name" value="Translation proteins"/>
    <property type="match status" value="1"/>
</dbReference>
<dbReference type="PROSITE" id="PS00301">
    <property type="entry name" value="G_TR_1"/>
    <property type="match status" value="1"/>
</dbReference>
<dbReference type="PROSITE" id="PS51722">
    <property type="entry name" value="G_TR_2"/>
    <property type="match status" value="1"/>
</dbReference>
<feature type="chain" id="PRO_1000008862" description="Elongation factor G">
    <location>
        <begin position="1"/>
        <end position="706"/>
    </location>
</feature>
<feature type="domain" description="tr-type G">
    <location>
        <begin position="8"/>
        <end position="297"/>
    </location>
</feature>
<feature type="binding site" evidence="1">
    <location>
        <begin position="17"/>
        <end position="24"/>
    </location>
    <ligand>
        <name>GTP</name>
        <dbReference type="ChEBI" id="CHEBI:37565"/>
    </ligand>
</feature>
<feature type="binding site" evidence="1">
    <location>
        <begin position="95"/>
        <end position="99"/>
    </location>
    <ligand>
        <name>GTP</name>
        <dbReference type="ChEBI" id="CHEBI:37565"/>
    </ligand>
</feature>
<feature type="binding site" evidence="1">
    <location>
        <begin position="149"/>
        <end position="152"/>
    </location>
    <ligand>
        <name>GTP</name>
        <dbReference type="ChEBI" id="CHEBI:37565"/>
    </ligand>
</feature>
<evidence type="ECO:0000255" key="1">
    <source>
        <dbReference type="HAMAP-Rule" id="MF_00054"/>
    </source>
</evidence>
<gene>
    <name evidence="1" type="primary">fusA</name>
    <name type="ordered locus">OTBS_1784</name>
</gene>
<comment type="function">
    <text evidence="1">Catalyzes the GTP-dependent ribosomal translocation step during translation elongation. During this step, the ribosome changes from the pre-translocational (PRE) to the post-translocational (POST) state as the newly formed A-site-bound peptidyl-tRNA and P-site-bound deacylated tRNA move to the P and E sites, respectively. Catalyzes the coordinated movement of the two tRNA molecules, the mRNA and conformational changes in the ribosome.</text>
</comment>
<comment type="subcellular location">
    <subcellularLocation>
        <location evidence="1">Cytoplasm</location>
    </subcellularLocation>
</comment>
<comment type="similarity">
    <text evidence="1">Belongs to the TRAFAC class translation factor GTPase superfamily. Classic translation factor GTPase family. EF-G/EF-2 subfamily.</text>
</comment>
<protein>
    <recommendedName>
        <fullName evidence="1">Elongation factor G</fullName>
        <shortName evidence="1">EF-G</shortName>
    </recommendedName>
</protein>
<name>EFG_ORITB</name>
<sequence>MSENHKLSYVRNIGIGAHIDAGKTTTTERILYYTGVSYSIGEVHDGTTVMDYMKQERDRGITIQSAATTCHWIKKDDCAEQASQKEQEYKINIIDTPGHVDFTIEVGRALRVLDGMIAVFDGVAGVEPQSETVWRQADKYAVPRICFVNKMDRIGADFFRCVQMMKDRLGTKPLVIQLPIGIEDTFKGVIDLVKMKAIVWSNEDLGAKYEYHSIPSNMHAMVEDYRHQLLETVVEVDEEIFNSYVSNEDLSEADIRKCIRKGAISGLFVPVLCGSAFKNKGVQTLLDAVVDYLPSPNDVNSIKAVDVKTEQEISRKVSVDEQFSALAFKVINDPFVGSLTFIRIYSGKLQTGSTVINTTKNQKERISRMLLMHANNRKDIKEAVAGDIVALTGLKSTTTGDTICSLDSQIILEKIEFPKPVIELAVEPKTPADQEKISAALVKLAAEDPSLVFTVDSETNQMVIKGMGELHLEIIIDRMKEEFKVEANVGAPRVAYRETITQSYTVDYTHKKQTGGAGQFARVKIIFEPLEVGAGFQFESKIVGGAIPKEFIPGVEKGLEEIKESGVVAGYPTIDFKATLIDGSFHEVDSSVLAFEIAAKNAFKEGITKAGPKLLGPIMKVEVISPNEYMGDIIGDLNSRSGVIQSMEPRGNTQIINAYVPLGQMFGYVSTLRSLSQGRAQYSMVFSHYEQVSRSIAEKIQAKDKK</sequence>